<sequence length="217" mass="23283">MGLRIKICGLRDPQQAIAIADLGATAIGFIAVRQSPRYVSPAQVAEIAQALQKTHPTVNRVGVFANATAEELEAYVAAGITSLQLHGDETLADSQRWRDRFPALELIKALRIRSTADLALAESFTDCVDTLLLDAYHPQMLGGTGATLDWQALQAFQPSRPWLLAGGLTPENITTALSQLHPAGIDLSSGVERSPGDKDLEKVTALFSSLARNSLLK</sequence>
<organism>
    <name type="scientific">Synechococcus sp. (strain ATCC 27144 / PCC 6301 / SAUG 1402/1)</name>
    <name type="common">Anacystis nidulans</name>
    <dbReference type="NCBI Taxonomy" id="269084"/>
    <lineage>
        <taxon>Bacteria</taxon>
        <taxon>Bacillati</taxon>
        <taxon>Cyanobacteriota</taxon>
        <taxon>Cyanophyceae</taxon>
        <taxon>Synechococcales</taxon>
        <taxon>Synechococcaceae</taxon>
        <taxon>Synechococcus</taxon>
    </lineage>
</organism>
<gene>
    <name evidence="1" type="primary">trpF</name>
    <name type="ordered locus">syc1108_c</name>
</gene>
<proteinExistence type="inferred from homology"/>
<name>TRPF_SYNP6</name>
<reference key="1">
    <citation type="journal article" date="2007" name="Photosyn. Res.">
        <title>Complete nucleotide sequence of the freshwater unicellular cyanobacterium Synechococcus elongatus PCC 6301 chromosome: gene content and organization.</title>
        <authorList>
            <person name="Sugita C."/>
            <person name="Ogata K."/>
            <person name="Shikata M."/>
            <person name="Jikuya H."/>
            <person name="Takano J."/>
            <person name="Furumichi M."/>
            <person name="Kanehisa M."/>
            <person name="Omata T."/>
            <person name="Sugiura M."/>
            <person name="Sugita M."/>
        </authorList>
    </citation>
    <scope>NUCLEOTIDE SEQUENCE [LARGE SCALE GENOMIC DNA]</scope>
    <source>
        <strain>ATCC 27144 / PCC 6301 / SAUG 1402/1</strain>
    </source>
</reference>
<comment type="catalytic activity">
    <reaction evidence="1">
        <text>N-(5-phospho-beta-D-ribosyl)anthranilate = 1-(2-carboxyphenylamino)-1-deoxy-D-ribulose 5-phosphate</text>
        <dbReference type="Rhea" id="RHEA:21540"/>
        <dbReference type="ChEBI" id="CHEBI:18277"/>
        <dbReference type="ChEBI" id="CHEBI:58613"/>
        <dbReference type="EC" id="5.3.1.24"/>
    </reaction>
</comment>
<comment type="pathway">
    <text evidence="1">Amino-acid biosynthesis; L-tryptophan biosynthesis; L-tryptophan from chorismate: step 3/5.</text>
</comment>
<comment type="similarity">
    <text evidence="1">Belongs to the TrpF family.</text>
</comment>
<accession>Q5N322</accession>
<feature type="chain" id="PRO_1000197133" description="N-(5'-phosphoribosyl)anthranilate isomerase">
    <location>
        <begin position="1"/>
        <end position="217"/>
    </location>
</feature>
<dbReference type="EC" id="5.3.1.24" evidence="1"/>
<dbReference type="EMBL" id="AP008231">
    <property type="protein sequence ID" value="BAD79298.1"/>
    <property type="molecule type" value="Genomic_DNA"/>
</dbReference>
<dbReference type="RefSeq" id="WP_011243419.1">
    <property type="nucleotide sequence ID" value="NC_006576.1"/>
</dbReference>
<dbReference type="SMR" id="Q5N322"/>
<dbReference type="KEGG" id="syc:syc1108_c"/>
<dbReference type="eggNOG" id="COG0135">
    <property type="taxonomic scope" value="Bacteria"/>
</dbReference>
<dbReference type="UniPathway" id="UPA00035">
    <property type="reaction ID" value="UER00042"/>
</dbReference>
<dbReference type="Proteomes" id="UP000001175">
    <property type="component" value="Chromosome"/>
</dbReference>
<dbReference type="GO" id="GO:0004640">
    <property type="term" value="F:phosphoribosylanthranilate isomerase activity"/>
    <property type="evidence" value="ECO:0007669"/>
    <property type="project" value="UniProtKB-UniRule"/>
</dbReference>
<dbReference type="GO" id="GO:0000162">
    <property type="term" value="P:L-tryptophan biosynthetic process"/>
    <property type="evidence" value="ECO:0007669"/>
    <property type="project" value="UniProtKB-UniRule"/>
</dbReference>
<dbReference type="CDD" id="cd00405">
    <property type="entry name" value="PRAI"/>
    <property type="match status" value="1"/>
</dbReference>
<dbReference type="Gene3D" id="3.20.20.70">
    <property type="entry name" value="Aldolase class I"/>
    <property type="match status" value="1"/>
</dbReference>
<dbReference type="HAMAP" id="MF_00135">
    <property type="entry name" value="PRAI"/>
    <property type="match status" value="1"/>
</dbReference>
<dbReference type="InterPro" id="IPR013785">
    <property type="entry name" value="Aldolase_TIM"/>
</dbReference>
<dbReference type="InterPro" id="IPR001240">
    <property type="entry name" value="PRAI_dom"/>
</dbReference>
<dbReference type="InterPro" id="IPR011060">
    <property type="entry name" value="RibuloseP-bd_barrel"/>
</dbReference>
<dbReference type="InterPro" id="IPR044643">
    <property type="entry name" value="TrpF_fam"/>
</dbReference>
<dbReference type="NCBIfam" id="NF002298">
    <property type="entry name" value="PRK01222.1-4"/>
    <property type="match status" value="1"/>
</dbReference>
<dbReference type="PANTHER" id="PTHR42894">
    <property type="entry name" value="N-(5'-PHOSPHORIBOSYL)ANTHRANILATE ISOMERASE"/>
    <property type="match status" value="1"/>
</dbReference>
<dbReference type="PANTHER" id="PTHR42894:SF1">
    <property type="entry name" value="N-(5'-PHOSPHORIBOSYL)ANTHRANILATE ISOMERASE"/>
    <property type="match status" value="1"/>
</dbReference>
<dbReference type="Pfam" id="PF00697">
    <property type="entry name" value="PRAI"/>
    <property type="match status" value="1"/>
</dbReference>
<dbReference type="SUPFAM" id="SSF51366">
    <property type="entry name" value="Ribulose-phoshate binding barrel"/>
    <property type="match status" value="1"/>
</dbReference>
<evidence type="ECO:0000255" key="1">
    <source>
        <dbReference type="HAMAP-Rule" id="MF_00135"/>
    </source>
</evidence>
<keyword id="KW-0028">Amino-acid biosynthesis</keyword>
<keyword id="KW-0057">Aromatic amino acid biosynthesis</keyword>
<keyword id="KW-0413">Isomerase</keyword>
<keyword id="KW-0822">Tryptophan biosynthesis</keyword>
<protein>
    <recommendedName>
        <fullName evidence="1">N-(5'-phosphoribosyl)anthranilate isomerase</fullName>
        <shortName evidence="1">PRAI</shortName>
        <ecNumber evidence="1">5.3.1.24</ecNumber>
    </recommendedName>
</protein>